<evidence type="ECO:0000250" key="1"/>
<evidence type="ECO:0000255" key="2"/>
<evidence type="ECO:0000255" key="3">
    <source>
        <dbReference type="PROSITE-ProRule" id="PRU00720"/>
    </source>
</evidence>
<evidence type="ECO:0000255" key="4">
    <source>
        <dbReference type="PROSITE-ProRule" id="PRU01055"/>
    </source>
</evidence>
<evidence type="ECO:0000269" key="5">
    <source>
    </source>
</evidence>
<evidence type="ECO:0000269" key="6">
    <source>
    </source>
</evidence>
<evidence type="ECO:0000305" key="7"/>
<reference key="1">
    <citation type="submission" date="2000-02" db="EMBL/GenBank/DDBJ databases">
        <authorList>
            <person name="Vice S.J."/>
            <person name="Gordy P.W."/>
            <person name="Bowen R.A."/>
        </authorList>
    </citation>
    <scope>NUCLEOTIDE SEQUENCE [MRNA]</scope>
</reference>
<reference key="2">
    <citation type="journal article" date="2005" name="J. Interferon Cytokine Res.">
        <title>Intracellular localization and antiviral property of canine Mx proteins.</title>
        <authorList>
            <person name="Nakamura T."/>
            <person name="Asano A."/>
            <person name="Okano S."/>
            <person name="Ko J.H."/>
            <person name="Kon Y."/>
            <person name="Watanabe T."/>
            <person name="Agui T."/>
        </authorList>
    </citation>
    <scope>NUCLEOTIDE SEQUENCE [MRNA]</scope>
    <scope>FUNCTION</scope>
    <scope>SUBCELLULAR LOCATION</scope>
</reference>
<reference key="3">
    <citation type="journal article" date="2007" name="Microbes Infect.">
        <title>The Mx GTPase family of interferon-induced antiviral proteins.</title>
        <authorList>
            <person name="Haller O."/>
            <person name="Stertz S."/>
            <person name="Kochs G."/>
        </authorList>
    </citation>
    <scope>REVIEW</scope>
    <scope>INDUCTION</scope>
</reference>
<name>MX2_CANLF</name>
<protein>
    <recommendedName>
        <fullName>Interferon-induced GTP-binding protein Mx2</fullName>
    </recommendedName>
    <alternativeName>
        <fullName>Myxovirus resistance protein 2</fullName>
    </alternativeName>
</protein>
<keyword id="KW-0051">Antiviral defense</keyword>
<keyword id="KW-0963">Cytoplasm</keyword>
<keyword id="KW-0342">GTP-binding</keyword>
<keyword id="KW-0391">Immunity</keyword>
<keyword id="KW-0399">Innate immunity</keyword>
<keyword id="KW-0547">Nucleotide-binding</keyword>
<keyword id="KW-0539">Nucleus</keyword>
<keyword id="KW-1185">Reference proteome</keyword>
<gene>
    <name type="primary">MX2</name>
</gene>
<organism>
    <name type="scientific">Canis lupus familiaris</name>
    <name type="common">Dog</name>
    <name type="synonym">Canis familiaris</name>
    <dbReference type="NCBI Taxonomy" id="9615"/>
    <lineage>
        <taxon>Eukaryota</taxon>
        <taxon>Metazoa</taxon>
        <taxon>Chordata</taxon>
        <taxon>Craniata</taxon>
        <taxon>Vertebrata</taxon>
        <taxon>Euteleostomi</taxon>
        <taxon>Mammalia</taxon>
        <taxon>Eutheria</taxon>
        <taxon>Laurasiatheria</taxon>
        <taxon>Carnivora</taxon>
        <taxon>Caniformia</taxon>
        <taxon>Canidae</taxon>
        <taxon>Canis</taxon>
    </lineage>
</organism>
<comment type="function">
    <text evidence="5">Interferon-induced dynamin-like GTPase with antiviral activity against vesicular stomatitis virus (VSV).</text>
</comment>
<comment type="subcellular location">
    <subcellularLocation>
        <location evidence="5">Cytoplasm</location>
    </subcellularLocation>
    <subcellularLocation>
        <location evidence="1">Nucleus</location>
    </subcellularLocation>
</comment>
<comment type="induction">
    <text evidence="6">By type I and type III interferons.</text>
</comment>
<comment type="similarity">
    <text evidence="4">Belongs to the TRAFAC class dynamin-like GTPase superfamily. Dynamin/Fzo/YdjA family.</text>
</comment>
<proteinExistence type="evidence at transcript level"/>
<feature type="chain" id="PRO_0000206597" description="Interferon-induced GTP-binding protein Mx2">
    <location>
        <begin position="1"/>
        <end position="711"/>
    </location>
</feature>
<feature type="domain" description="Dynamin-type G" evidence="4">
    <location>
        <begin position="115"/>
        <end position="387"/>
    </location>
</feature>
<feature type="domain" description="GED" evidence="3">
    <location>
        <begin position="623"/>
        <end position="711"/>
    </location>
</feature>
<feature type="region of interest" description="G1 motif" evidence="4">
    <location>
        <begin position="125"/>
        <end position="132"/>
    </location>
</feature>
<feature type="region of interest" description="G2 motif" evidence="4">
    <location>
        <begin position="150"/>
        <end position="152"/>
    </location>
</feature>
<feature type="region of interest" description="G3 motif" evidence="4">
    <location>
        <begin position="225"/>
        <end position="228"/>
    </location>
</feature>
<feature type="region of interest" description="G4 motif" evidence="4">
    <location>
        <begin position="294"/>
        <end position="297"/>
    </location>
</feature>
<feature type="region of interest" description="G5 motif" evidence="4">
    <location>
        <begin position="326"/>
        <end position="329"/>
    </location>
</feature>
<feature type="binding site" evidence="2">
    <location>
        <begin position="125"/>
        <end position="132"/>
    </location>
    <ligand>
        <name>GTP</name>
        <dbReference type="ChEBI" id="CHEBI:37565"/>
    </ligand>
</feature>
<feature type="binding site" evidence="2">
    <location>
        <begin position="225"/>
        <end position="229"/>
    </location>
    <ligand>
        <name>GTP</name>
        <dbReference type="ChEBI" id="CHEBI:37565"/>
    </ligand>
</feature>
<feature type="binding site" evidence="2">
    <location>
        <begin position="294"/>
        <end position="297"/>
    </location>
    <ligand>
        <name>GTP</name>
        <dbReference type="ChEBI" id="CHEBI:37565"/>
    </ligand>
</feature>
<feature type="sequence conflict" description="In Ref. 2; no nucleotide entry." evidence="7" ref="2">
    <original>A</original>
    <variation>T</variation>
    <location>
        <position position="705"/>
    </location>
</feature>
<accession>Q9N0Y2</accession>
<dbReference type="EMBL" id="AF239824">
    <property type="protein sequence ID" value="AAF44685.1"/>
    <property type="molecule type" value="mRNA"/>
</dbReference>
<dbReference type="RefSeq" id="NP_001003133.1">
    <property type="nucleotide sequence ID" value="NM_001003133.1"/>
</dbReference>
<dbReference type="RefSeq" id="XP_038299486.1">
    <property type="nucleotide sequence ID" value="XM_038443558.1"/>
</dbReference>
<dbReference type="RefSeq" id="XP_038317750.1">
    <property type="nucleotide sequence ID" value="XM_038461822.1"/>
</dbReference>
<dbReference type="RefSeq" id="XP_038437465.1">
    <property type="nucleotide sequence ID" value="XM_038581537.1"/>
</dbReference>
<dbReference type="SMR" id="Q9N0Y2"/>
<dbReference type="FunCoup" id="Q9N0Y2">
    <property type="interactions" value="3"/>
</dbReference>
<dbReference type="STRING" id="9615.ENSCAFP00000051654"/>
<dbReference type="PaxDb" id="9612-ENSCAFP00000014935"/>
<dbReference type="Ensembl" id="ENSCAFT00000016149.4">
    <property type="protein sequence ID" value="ENSCAFP00000014935.2"/>
    <property type="gene ID" value="ENSCAFG00000010167.5"/>
</dbReference>
<dbReference type="Ensembl" id="ENSCAFT00845053398.1">
    <property type="protein sequence ID" value="ENSCAFP00845041949.1"/>
    <property type="gene ID" value="ENSCAFG00845030104.1"/>
</dbReference>
<dbReference type="GeneID" id="403744"/>
<dbReference type="VEuPathDB" id="HostDB:ENSCAFG00845030104"/>
<dbReference type="VGNC" id="VGNC:43512">
    <property type="gene designation" value="MX2"/>
</dbReference>
<dbReference type="eggNOG" id="KOG0446">
    <property type="taxonomic scope" value="Eukaryota"/>
</dbReference>
<dbReference type="GeneTree" id="ENSGT00940000163266"/>
<dbReference type="HOGENOM" id="CLU_008964_8_0_1"/>
<dbReference type="InParanoid" id="Q9N0Y2"/>
<dbReference type="OMA" id="DECTGWE"/>
<dbReference type="OrthoDB" id="9909359at2759"/>
<dbReference type="TreeFam" id="TF331484"/>
<dbReference type="Reactome" id="R-CFA-1169408">
    <property type="pathway name" value="ISG15 antiviral mechanism"/>
</dbReference>
<dbReference type="Proteomes" id="UP000002254">
    <property type="component" value="Chromosome 31"/>
</dbReference>
<dbReference type="Proteomes" id="UP000694429">
    <property type="component" value="Unplaced"/>
</dbReference>
<dbReference type="Proteomes" id="UP000694542">
    <property type="component" value="Unplaced"/>
</dbReference>
<dbReference type="Proteomes" id="UP000805418">
    <property type="component" value="Chromosome 31"/>
</dbReference>
<dbReference type="Bgee" id="ENSCAFG00000010167">
    <property type="expression patterns" value="Expressed in adrenal cortex and 48 other cell types or tissues"/>
</dbReference>
<dbReference type="GO" id="GO:0005737">
    <property type="term" value="C:cytoplasm"/>
    <property type="evidence" value="ECO:0000314"/>
    <property type="project" value="UniProtKB"/>
</dbReference>
<dbReference type="GO" id="GO:0070382">
    <property type="term" value="C:exocytic vesicle"/>
    <property type="evidence" value="ECO:0000314"/>
    <property type="project" value="CAFA"/>
</dbReference>
<dbReference type="GO" id="GO:0005874">
    <property type="term" value="C:microtubule"/>
    <property type="evidence" value="ECO:0000318"/>
    <property type="project" value="GO_Central"/>
</dbReference>
<dbReference type="GO" id="GO:0005634">
    <property type="term" value="C:nucleus"/>
    <property type="evidence" value="ECO:0000318"/>
    <property type="project" value="GO_Central"/>
</dbReference>
<dbReference type="GO" id="GO:0005886">
    <property type="term" value="C:plasma membrane"/>
    <property type="evidence" value="ECO:0000318"/>
    <property type="project" value="GO_Central"/>
</dbReference>
<dbReference type="GO" id="GO:0098793">
    <property type="term" value="C:presynapse"/>
    <property type="evidence" value="ECO:0007669"/>
    <property type="project" value="GOC"/>
</dbReference>
<dbReference type="GO" id="GO:0045202">
    <property type="term" value="C:synapse"/>
    <property type="evidence" value="ECO:0000318"/>
    <property type="project" value="GO_Central"/>
</dbReference>
<dbReference type="GO" id="GO:0005525">
    <property type="term" value="F:GTP binding"/>
    <property type="evidence" value="ECO:0007669"/>
    <property type="project" value="UniProtKB-KW"/>
</dbReference>
<dbReference type="GO" id="GO:0003924">
    <property type="term" value="F:GTPase activity"/>
    <property type="evidence" value="ECO:0000318"/>
    <property type="project" value="GO_Central"/>
</dbReference>
<dbReference type="GO" id="GO:0008017">
    <property type="term" value="F:microtubule binding"/>
    <property type="evidence" value="ECO:0000318"/>
    <property type="project" value="GO_Central"/>
</dbReference>
<dbReference type="GO" id="GO:0051607">
    <property type="term" value="P:defense response to virus"/>
    <property type="evidence" value="ECO:0000318"/>
    <property type="project" value="GO_Central"/>
</dbReference>
<dbReference type="GO" id="GO:0045087">
    <property type="term" value="P:innate immune response"/>
    <property type="evidence" value="ECO:0007669"/>
    <property type="project" value="UniProtKB-KW"/>
</dbReference>
<dbReference type="GO" id="GO:0031623">
    <property type="term" value="P:receptor internalization"/>
    <property type="evidence" value="ECO:0000318"/>
    <property type="project" value="GO_Central"/>
</dbReference>
<dbReference type="GO" id="GO:0009615">
    <property type="term" value="P:response to virus"/>
    <property type="evidence" value="ECO:0000314"/>
    <property type="project" value="UniProtKB"/>
</dbReference>
<dbReference type="GO" id="GO:0016185">
    <property type="term" value="P:synaptic vesicle budding from presynaptic endocytic zone membrane"/>
    <property type="evidence" value="ECO:0000318"/>
    <property type="project" value="GO_Central"/>
</dbReference>
<dbReference type="CDD" id="cd08771">
    <property type="entry name" value="DLP_1"/>
    <property type="match status" value="1"/>
</dbReference>
<dbReference type="FunFam" id="1.20.120.1240:FF:000007">
    <property type="entry name" value="Interferon-induced GTP-binding protein Mx1"/>
    <property type="match status" value="1"/>
</dbReference>
<dbReference type="FunFam" id="3.40.50.300:FF:000621">
    <property type="entry name" value="Interferon-induced GTP-binding protein Mx1"/>
    <property type="match status" value="1"/>
</dbReference>
<dbReference type="Gene3D" id="1.20.120.1240">
    <property type="entry name" value="Dynamin, middle domain"/>
    <property type="match status" value="1"/>
</dbReference>
<dbReference type="Gene3D" id="3.40.50.300">
    <property type="entry name" value="P-loop containing nucleotide triphosphate hydrolases"/>
    <property type="match status" value="1"/>
</dbReference>
<dbReference type="InterPro" id="IPR022812">
    <property type="entry name" value="Dynamin"/>
</dbReference>
<dbReference type="InterPro" id="IPR001401">
    <property type="entry name" value="Dynamin_GTPase"/>
</dbReference>
<dbReference type="InterPro" id="IPR019762">
    <property type="entry name" value="Dynamin_GTPase_CS"/>
</dbReference>
<dbReference type="InterPro" id="IPR045063">
    <property type="entry name" value="Dynamin_N"/>
</dbReference>
<dbReference type="InterPro" id="IPR000375">
    <property type="entry name" value="Dynamin_stalk"/>
</dbReference>
<dbReference type="InterPro" id="IPR030381">
    <property type="entry name" value="G_DYNAMIN_dom"/>
</dbReference>
<dbReference type="InterPro" id="IPR003130">
    <property type="entry name" value="GED"/>
</dbReference>
<dbReference type="InterPro" id="IPR020850">
    <property type="entry name" value="GED_dom"/>
</dbReference>
<dbReference type="InterPro" id="IPR027417">
    <property type="entry name" value="P-loop_NTPase"/>
</dbReference>
<dbReference type="PANTHER" id="PTHR11566">
    <property type="entry name" value="DYNAMIN"/>
    <property type="match status" value="1"/>
</dbReference>
<dbReference type="PANTHER" id="PTHR11566:SF46">
    <property type="entry name" value="INTERFERON-INDUCED GTP-BINDING PROTEIN MX2"/>
    <property type="match status" value="1"/>
</dbReference>
<dbReference type="Pfam" id="PF01031">
    <property type="entry name" value="Dynamin_M"/>
    <property type="match status" value="1"/>
</dbReference>
<dbReference type="Pfam" id="PF00350">
    <property type="entry name" value="Dynamin_N"/>
    <property type="match status" value="1"/>
</dbReference>
<dbReference type="Pfam" id="PF02212">
    <property type="entry name" value="GED"/>
    <property type="match status" value="1"/>
</dbReference>
<dbReference type="PRINTS" id="PR00195">
    <property type="entry name" value="DYNAMIN"/>
</dbReference>
<dbReference type="SMART" id="SM00053">
    <property type="entry name" value="DYNc"/>
    <property type="match status" value="1"/>
</dbReference>
<dbReference type="SMART" id="SM00302">
    <property type="entry name" value="GED"/>
    <property type="match status" value="1"/>
</dbReference>
<dbReference type="SUPFAM" id="SSF52540">
    <property type="entry name" value="P-loop containing nucleoside triphosphate hydrolases"/>
    <property type="match status" value="1"/>
</dbReference>
<dbReference type="PROSITE" id="PS00410">
    <property type="entry name" value="G_DYNAMIN_1"/>
    <property type="match status" value="1"/>
</dbReference>
<dbReference type="PROSITE" id="PS51718">
    <property type="entry name" value="G_DYNAMIN_2"/>
    <property type="match status" value="1"/>
</dbReference>
<dbReference type="PROSITE" id="PS51388">
    <property type="entry name" value="GED"/>
    <property type="match status" value="1"/>
</dbReference>
<sequence length="711" mass="81442">MSKAHGSRPYRRHNVVIPRQQPEKEMNFVQQQPPPSDAAARQMMYPPNCQVGVQDPVYLAKEFNLLTLNPQQLEGSRHQQMAKGPEKSLYSQYEQKVRPCIDLVDSLRALGVEQDLALPAIAVIGDQSSGKSSVLEALSGVALPRGSGIVTRCPLVLKLKRDPHKAWRGRISYRKTELQFQDPSQVEKEIRQAQNIIAGQGLGISHELISLEITSPEVPDLTLIDLPGITRVAVGNQPQDIGVQIKALIKNYIQKQETINLVVVPCNVDIATTEALSMAQEVDPNGDRTIGVLTKPDLVDRGTEKTVVNVAQNLTYHLQKGYMIVRCRGQEEITNQLSLAEATEKERMFFQTHPYFRALLEEGKATVPCLAERLTKELILHINKSLPLLEKQIRESHQRATDELHQCGDSIPSNEADKMFFLIEKIKLFNQDIDKLIEGEEIVKKNETRLYNKIREEFEHWALVLTANTQKVKNIVSEEVSVYEKQYRGKELLGFVNYKTFETIVHQYIEQLVEPALTMLRKTIEIVWQAFTDTAKKHFSVFSNLSQTIQNKIEDIKTRQAETAENLIRLQFRMEQLVYCQDQIYSVVLRKVRKEVFNPAGKAAQDLQLKFPFPKDLPSMSSNDEIGVHLNAYFLETSKRLANQIPFIIQYFVLQENGSCLQKAMMQILQEREQYSWLLQEHADTSAKRRFLKEKIYRLAQARRALYMFFS</sequence>